<feature type="signal peptide" evidence="4">
    <location>
        <begin position="1"/>
        <end position="26"/>
    </location>
</feature>
<feature type="chain" id="PRO_0000014414" description="CCN family member 3">
    <location>
        <begin position="27"/>
        <end position="353"/>
    </location>
</feature>
<feature type="domain" description="IGFBP N-terminal" evidence="8">
    <location>
        <begin position="29"/>
        <end position="103"/>
    </location>
</feature>
<feature type="domain" description="VWFC" evidence="7">
    <location>
        <begin position="106"/>
        <end position="172"/>
    </location>
</feature>
<feature type="domain" description="TSP type-1" evidence="6">
    <location>
        <begin position="203"/>
        <end position="248"/>
    </location>
</feature>
<feature type="domain" description="CTCK" evidence="5">
    <location>
        <begin position="260"/>
        <end position="334"/>
    </location>
</feature>
<feature type="glycosylation site" description="N-linked (GlcNAc...) asparagine" evidence="4">
    <location>
        <position position="276"/>
    </location>
</feature>
<feature type="disulfide bond" evidence="8">
    <location>
        <begin position="33"/>
        <end position="59"/>
    </location>
</feature>
<feature type="disulfide bond" evidence="8">
    <location>
        <begin position="37"/>
        <end position="61"/>
    </location>
</feature>
<feature type="disulfide bond" evidence="8">
    <location>
        <begin position="41"/>
        <end position="62"/>
    </location>
</feature>
<feature type="disulfide bond" evidence="8">
    <location>
        <begin position="48"/>
        <end position="65"/>
    </location>
</feature>
<feature type="disulfide bond" evidence="8">
    <location>
        <begin position="73"/>
        <end position="87"/>
    </location>
</feature>
<feature type="disulfide bond" evidence="8">
    <location>
        <begin position="79"/>
        <end position="100"/>
    </location>
</feature>
<feature type="disulfide bond" evidence="1">
    <location>
        <begin position="260"/>
        <end position="297"/>
    </location>
</feature>
<feature type="disulfide bond" evidence="1">
    <location>
        <begin position="277"/>
        <end position="311"/>
    </location>
</feature>
<feature type="disulfide bond" evidence="1">
    <location>
        <begin position="288"/>
        <end position="327"/>
    </location>
</feature>
<feature type="disulfide bond" evidence="1">
    <location>
        <begin position="291"/>
        <end position="329"/>
    </location>
</feature>
<feature type="disulfide bond" evidence="1">
    <location>
        <begin position="296"/>
        <end position="333"/>
    </location>
</feature>
<sequence length="353" mass="38667">MEPGGGHSLPVLLLLLLLLLLRPSEVNGREAPCPRPCGGRCPAEPPRCAPGVPAVLDGCGCCLVCARQRGESCSPLLPCDESGGLYCDRGPEDGGGTGICMVLEGDNCVFDGMIYRNGETFQPSCKYQCTCRDGQIGCLPRCNLGLLLPGPDCPFPRKIEVPGECCEKWVCEPRDEVLLGGFAMAAYRQEATLGIDVSDSSANCIEQTTEWSACSRSCGMGFSTRVTNRNQQCEMVKQTRLCMMRPCENEEPSDKKGKKCIRTKKSMKAVRFEYKNCTSVQTYKPRYCGLCNDGRCCTPHNTKTIQVEFRCPQGKFLKKPMMLINTCVCHGNCPQSNNAFFQPLDPMSSEAKI</sequence>
<gene>
    <name type="primary">CCN3</name>
    <name type="synonym">NOV</name>
</gene>
<keyword id="KW-0965">Cell junction</keyword>
<keyword id="KW-0963">Cytoplasm</keyword>
<keyword id="KW-1015">Disulfide bond</keyword>
<keyword id="KW-0303">Gap junction</keyword>
<keyword id="KW-0325">Glycoprotein</keyword>
<keyword id="KW-0339">Growth factor</keyword>
<keyword id="KW-0656">Proto-oncogene</keyword>
<keyword id="KW-1185">Reference proteome</keyword>
<keyword id="KW-0964">Secreted</keyword>
<keyword id="KW-0732">Signal</keyword>
<proteinExistence type="evidence at transcript level"/>
<organism>
    <name type="scientific">Coturnix japonica</name>
    <name type="common">Japanese quail</name>
    <name type="synonym">Coturnix coturnix japonica</name>
    <dbReference type="NCBI Taxonomy" id="93934"/>
    <lineage>
        <taxon>Eukaryota</taxon>
        <taxon>Metazoa</taxon>
        <taxon>Chordata</taxon>
        <taxon>Craniata</taxon>
        <taxon>Vertebrata</taxon>
        <taxon>Euteleostomi</taxon>
        <taxon>Archelosauria</taxon>
        <taxon>Archosauria</taxon>
        <taxon>Dinosauria</taxon>
        <taxon>Saurischia</taxon>
        <taxon>Theropoda</taxon>
        <taxon>Coelurosauria</taxon>
        <taxon>Aves</taxon>
        <taxon>Neognathae</taxon>
        <taxon>Galloanserae</taxon>
        <taxon>Galliformes</taxon>
        <taxon>Phasianidae</taxon>
        <taxon>Perdicinae</taxon>
        <taxon>Coturnix</taxon>
    </lineage>
</organism>
<accession>P42642</accession>
<evidence type="ECO:0000250" key="1"/>
<evidence type="ECO:0000250" key="2">
    <source>
        <dbReference type="UniProtKB" id="P48745"/>
    </source>
</evidence>
<evidence type="ECO:0000250" key="3">
    <source>
        <dbReference type="UniProtKB" id="Q9QZQ5"/>
    </source>
</evidence>
<evidence type="ECO:0000255" key="4"/>
<evidence type="ECO:0000255" key="5">
    <source>
        <dbReference type="PROSITE-ProRule" id="PRU00039"/>
    </source>
</evidence>
<evidence type="ECO:0000255" key="6">
    <source>
        <dbReference type="PROSITE-ProRule" id="PRU00210"/>
    </source>
</evidence>
<evidence type="ECO:0000255" key="7">
    <source>
        <dbReference type="PROSITE-ProRule" id="PRU00220"/>
    </source>
</evidence>
<evidence type="ECO:0000255" key="8">
    <source>
        <dbReference type="PROSITE-ProRule" id="PRU00653"/>
    </source>
</evidence>
<evidence type="ECO:0000305" key="9"/>
<reference key="1">
    <citation type="submission" date="1994-08" db="EMBL/GenBank/DDBJ databases">
        <authorList>
            <person name="Weiskirchen R."/>
            <person name="Bister K."/>
        </authorList>
    </citation>
    <scope>NUCLEOTIDE SEQUENCE [MRNA]</scope>
</reference>
<dbReference type="EMBL" id="U13063">
    <property type="protein sequence ID" value="AAA21128.1"/>
    <property type="molecule type" value="mRNA"/>
</dbReference>
<dbReference type="RefSeq" id="NP_001310148.1">
    <property type="nucleotide sequence ID" value="NM_001323219.1"/>
</dbReference>
<dbReference type="SMR" id="P42642"/>
<dbReference type="GlyCosmos" id="P42642">
    <property type="glycosylation" value="1 site, No reported glycans"/>
</dbReference>
<dbReference type="Ensembl" id="ENSCJPT00005009151.1">
    <property type="protein sequence ID" value="ENSCJPP00005005682.1"/>
    <property type="gene ID" value="ENSCJPG00005005391.1"/>
</dbReference>
<dbReference type="GeneID" id="107310512"/>
<dbReference type="KEGG" id="cjo:107310512"/>
<dbReference type="CTD" id="4856"/>
<dbReference type="GeneTree" id="ENSGT00940000159963"/>
<dbReference type="OrthoDB" id="365605at2759"/>
<dbReference type="Proteomes" id="UP000694412">
    <property type="component" value="Chromosome 2"/>
</dbReference>
<dbReference type="GO" id="GO:0005829">
    <property type="term" value="C:cytosol"/>
    <property type="evidence" value="ECO:0007669"/>
    <property type="project" value="Ensembl"/>
</dbReference>
<dbReference type="GO" id="GO:0031012">
    <property type="term" value="C:extracellular matrix"/>
    <property type="evidence" value="ECO:0007669"/>
    <property type="project" value="TreeGrafter"/>
</dbReference>
<dbReference type="GO" id="GO:0005615">
    <property type="term" value="C:extracellular space"/>
    <property type="evidence" value="ECO:0007669"/>
    <property type="project" value="TreeGrafter"/>
</dbReference>
<dbReference type="GO" id="GO:0005921">
    <property type="term" value="C:gap junction"/>
    <property type="evidence" value="ECO:0007669"/>
    <property type="project" value="UniProtKB-SubCell"/>
</dbReference>
<dbReference type="GO" id="GO:0043231">
    <property type="term" value="C:intracellular membrane-bounded organelle"/>
    <property type="evidence" value="ECO:0007669"/>
    <property type="project" value="Ensembl"/>
</dbReference>
<dbReference type="GO" id="GO:0008083">
    <property type="term" value="F:growth factor activity"/>
    <property type="evidence" value="ECO:0007669"/>
    <property type="project" value="UniProtKB-KW"/>
</dbReference>
<dbReference type="GO" id="GO:0008201">
    <property type="term" value="F:heparin binding"/>
    <property type="evidence" value="ECO:0007669"/>
    <property type="project" value="TreeGrafter"/>
</dbReference>
<dbReference type="GO" id="GO:0005179">
    <property type="term" value="F:hormone activity"/>
    <property type="evidence" value="ECO:0007669"/>
    <property type="project" value="Ensembl"/>
</dbReference>
<dbReference type="GO" id="GO:0005178">
    <property type="term" value="F:integrin binding"/>
    <property type="evidence" value="ECO:0007669"/>
    <property type="project" value="Ensembl"/>
</dbReference>
<dbReference type="GO" id="GO:0005112">
    <property type="term" value="F:Notch binding"/>
    <property type="evidence" value="ECO:0007669"/>
    <property type="project" value="Ensembl"/>
</dbReference>
<dbReference type="GO" id="GO:0001525">
    <property type="term" value="P:angiogenesis"/>
    <property type="evidence" value="ECO:0007669"/>
    <property type="project" value="Ensembl"/>
</dbReference>
<dbReference type="GO" id="GO:1990523">
    <property type="term" value="P:bone regeneration"/>
    <property type="evidence" value="ECO:0007669"/>
    <property type="project" value="Ensembl"/>
</dbReference>
<dbReference type="GO" id="GO:0033627">
    <property type="term" value="P:cell adhesion mediated by integrin"/>
    <property type="evidence" value="ECO:0007669"/>
    <property type="project" value="Ensembl"/>
</dbReference>
<dbReference type="GO" id="GO:0002062">
    <property type="term" value="P:chondrocyte differentiation"/>
    <property type="evidence" value="ECO:0007669"/>
    <property type="project" value="Ensembl"/>
</dbReference>
<dbReference type="GO" id="GO:0035767">
    <property type="term" value="P:endothelial cell chemotaxis"/>
    <property type="evidence" value="ECO:0007669"/>
    <property type="project" value="Ensembl"/>
</dbReference>
<dbReference type="GO" id="GO:0071603">
    <property type="term" value="P:endothelial cell-cell adhesion"/>
    <property type="evidence" value="ECO:0007669"/>
    <property type="project" value="Ensembl"/>
</dbReference>
<dbReference type="GO" id="GO:0010761">
    <property type="term" value="P:fibroblast migration"/>
    <property type="evidence" value="ECO:0007669"/>
    <property type="project" value="Ensembl"/>
</dbReference>
<dbReference type="GO" id="GO:0061484">
    <property type="term" value="P:hematopoietic stem cell homeostasis"/>
    <property type="evidence" value="ECO:0007669"/>
    <property type="project" value="Ensembl"/>
</dbReference>
<dbReference type="GO" id="GO:0030308">
    <property type="term" value="P:negative regulation of cell growth"/>
    <property type="evidence" value="ECO:0007669"/>
    <property type="project" value="Ensembl"/>
</dbReference>
<dbReference type="GO" id="GO:1902731">
    <property type="term" value="P:negative regulation of chondrocyte proliferation"/>
    <property type="evidence" value="ECO:0007669"/>
    <property type="project" value="Ensembl"/>
</dbReference>
<dbReference type="GO" id="GO:0050728">
    <property type="term" value="P:negative regulation of inflammatory response"/>
    <property type="evidence" value="ECO:0007669"/>
    <property type="project" value="Ensembl"/>
</dbReference>
<dbReference type="GO" id="GO:0046676">
    <property type="term" value="P:negative regulation of insulin secretion"/>
    <property type="evidence" value="ECO:0007669"/>
    <property type="project" value="Ensembl"/>
</dbReference>
<dbReference type="GO" id="GO:0090027">
    <property type="term" value="P:negative regulation of monocyte chemotaxis"/>
    <property type="evidence" value="ECO:0007669"/>
    <property type="project" value="Ensembl"/>
</dbReference>
<dbReference type="GO" id="GO:0010832">
    <property type="term" value="P:negative regulation of myotube differentiation"/>
    <property type="evidence" value="ECO:0007669"/>
    <property type="project" value="Ensembl"/>
</dbReference>
<dbReference type="GO" id="GO:1901223">
    <property type="term" value="P:negative regulation of non-canonical NF-kappaB signal transduction"/>
    <property type="evidence" value="ECO:0007669"/>
    <property type="project" value="Ensembl"/>
</dbReference>
<dbReference type="GO" id="GO:0060392">
    <property type="term" value="P:negative regulation of SMAD protein signal transduction"/>
    <property type="evidence" value="ECO:0007669"/>
    <property type="project" value="Ensembl"/>
</dbReference>
<dbReference type="GO" id="GO:0045597">
    <property type="term" value="P:positive regulation of cell differentiation"/>
    <property type="evidence" value="ECO:0007669"/>
    <property type="project" value="TreeGrafter"/>
</dbReference>
<dbReference type="GO" id="GO:0045747">
    <property type="term" value="P:positive regulation of Notch signaling pathway"/>
    <property type="evidence" value="ECO:0007669"/>
    <property type="project" value="Ensembl"/>
</dbReference>
<dbReference type="GO" id="GO:0045778">
    <property type="term" value="P:positive regulation of ossification"/>
    <property type="evidence" value="ECO:0007669"/>
    <property type="project" value="Ensembl"/>
</dbReference>
<dbReference type="GO" id="GO:0014909">
    <property type="term" value="P:smooth muscle cell migration"/>
    <property type="evidence" value="ECO:0007669"/>
    <property type="project" value="Ensembl"/>
</dbReference>
<dbReference type="GO" id="GO:0048659">
    <property type="term" value="P:smooth muscle cell proliferation"/>
    <property type="evidence" value="ECO:0007669"/>
    <property type="project" value="Ensembl"/>
</dbReference>
<dbReference type="GO" id="GO:0044342">
    <property type="term" value="P:type B pancreatic cell proliferation"/>
    <property type="evidence" value="ECO:0007669"/>
    <property type="project" value="Ensembl"/>
</dbReference>
<dbReference type="FunFam" id="2.20.100.10:FF:000165">
    <property type="entry name" value="CCN family member 3"/>
    <property type="match status" value="1"/>
</dbReference>
<dbReference type="FunFam" id="2.10.70.10:FF:000015">
    <property type="entry name" value="CYR61 isoform 1"/>
    <property type="match status" value="1"/>
</dbReference>
<dbReference type="Gene3D" id="2.10.70.10">
    <property type="entry name" value="Complement Module, domain 1"/>
    <property type="match status" value="1"/>
</dbReference>
<dbReference type="Gene3D" id="2.20.100.10">
    <property type="entry name" value="Thrombospondin type-1 (TSP1) repeat"/>
    <property type="match status" value="1"/>
</dbReference>
<dbReference type="InterPro" id="IPR050941">
    <property type="entry name" value="CCN"/>
</dbReference>
<dbReference type="InterPro" id="IPR006207">
    <property type="entry name" value="Cys_knot_C"/>
</dbReference>
<dbReference type="InterPro" id="IPR006208">
    <property type="entry name" value="Glyco_hormone_CN"/>
</dbReference>
<dbReference type="InterPro" id="IPR009030">
    <property type="entry name" value="Growth_fac_rcpt_cys_sf"/>
</dbReference>
<dbReference type="InterPro" id="IPR000867">
    <property type="entry name" value="IGFBP-like"/>
</dbReference>
<dbReference type="InterPro" id="IPR012395">
    <property type="entry name" value="IGFBP_CNN"/>
</dbReference>
<dbReference type="InterPro" id="IPR017891">
    <property type="entry name" value="Insulin_GF-bd_Cys-rich_CS"/>
</dbReference>
<dbReference type="InterPro" id="IPR043973">
    <property type="entry name" value="TSP1_CCN"/>
</dbReference>
<dbReference type="InterPro" id="IPR000884">
    <property type="entry name" value="TSP1_rpt"/>
</dbReference>
<dbReference type="InterPro" id="IPR036383">
    <property type="entry name" value="TSP1_rpt_sf"/>
</dbReference>
<dbReference type="InterPro" id="IPR001007">
    <property type="entry name" value="VWF_dom"/>
</dbReference>
<dbReference type="PANTHER" id="PTHR11348:SF8">
    <property type="entry name" value="CCN FAMILY MEMBER 3"/>
    <property type="match status" value="1"/>
</dbReference>
<dbReference type="PANTHER" id="PTHR11348">
    <property type="entry name" value="CONNECTIVE TISSUE GROWTH FACTOR-RELATED"/>
    <property type="match status" value="1"/>
</dbReference>
<dbReference type="Pfam" id="PF00007">
    <property type="entry name" value="Cys_knot"/>
    <property type="match status" value="1"/>
</dbReference>
<dbReference type="Pfam" id="PF00219">
    <property type="entry name" value="IGFBP"/>
    <property type="match status" value="1"/>
</dbReference>
<dbReference type="Pfam" id="PF19035">
    <property type="entry name" value="TSP1_CCN"/>
    <property type="match status" value="1"/>
</dbReference>
<dbReference type="Pfam" id="PF00093">
    <property type="entry name" value="VWC"/>
    <property type="match status" value="1"/>
</dbReference>
<dbReference type="PIRSF" id="PIRSF036495">
    <property type="entry name" value="IGFBP_rP_CNN"/>
    <property type="match status" value="1"/>
</dbReference>
<dbReference type="SMART" id="SM00041">
    <property type="entry name" value="CT"/>
    <property type="match status" value="1"/>
</dbReference>
<dbReference type="SMART" id="SM00121">
    <property type="entry name" value="IB"/>
    <property type="match status" value="1"/>
</dbReference>
<dbReference type="SMART" id="SM00209">
    <property type="entry name" value="TSP1"/>
    <property type="match status" value="1"/>
</dbReference>
<dbReference type="SMART" id="SM00214">
    <property type="entry name" value="VWC"/>
    <property type="match status" value="1"/>
</dbReference>
<dbReference type="SUPFAM" id="SSF57184">
    <property type="entry name" value="Growth factor receptor domain"/>
    <property type="match status" value="1"/>
</dbReference>
<dbReference type="SUPFAM" id="SSF82895">
    <property type="entry name" value="TSP-1 type 1 repeat"/>
    <property type="match status" value="1"/>
</dbReference>
<dbReference type="PROSITE" id="PS01185">
    <property type="entry name" value="CTCK_1"/>
    <property type="match status" value="1"/>
</dbReference>
<dbReference type="PROSITE" id="PS01225">
    <property type="entry name" value="CTCK_2"/>
    <property type="match status" value="1"/>
</dbReference>
<dbReference type="PROSITE" id="PS00222">
    <property type="entry name" value="IGFBP_N_1"/>
    <property type="match status" value="1"/>
</dbReference>
<dbReference type="PROSITE" id="PS51323">
    <property type="entry name" value="IGFBP_N_2"/>
    <property type="match status" value="1"/>
</dbReference>
<dbReference type="PROSITE" id="PS50092">
    <property type="entry name" value="TSP1"/>
    <property type="match status" value="1"/>
</dbReference>
<dbReference type="PROSITE" id="PS01208">
    <property type="entry name" value="VWFC_1"/>
    <property type="match status" value="1"/>
</dbReference>
<dbReference type="PROSITE" id="PS50184">
    <property type="entry name" value="VWFC_2"/>
    <property type="match status" value="1"/>
</dbReference>
<comment type="function">
    <text evidence="1">Immediate-early protein likely to play a role in cell growth regulation.</text>
</comment>
<comment type="subcellular location">
    <subcellularLocation>
        <location evidence="3">Secreted</location>
    </subcellularLocation>
    <subcellularLocation>
        <location evidence="3">Cytoplasm</location>
    </subcellularLocation>
    <subcellularLocation>
        <location evidence="3">Cell junction</location>
        <location evidence="3">Gap junction</location>
    </subcellularLocation>
</comment>
<comment type="similarity">
    <text evidence="9">Belongs to the CCN family.</text>
</comment>
<name>CCN3_COTJA</name>
<protein>
    <recommendedName>
        <fullName>CCN family member 3</fullName>
    </recommendedName>
    <alternativeName>
        <fullName evidence="2">Cellular communication network factor 3</fullName>
    </alternativeName>
    <alternativeName>
        <fullName>Nephroblastoma-overexpressed gene protein</fullName>
    </alternativeName>
    <alternativeName>
        <fullName>Protein NOV</fullName>
    </alternativeName>
</protein>